<name>GPDA_CUPTR</name>
<protein>
    <recommendedName>
        <fullName evidence="1">Glycerol-3-phosphate dehydrogenase [NAD(P)+]</fullName>
        <ecNumber evidence="1">1.1.1.94</ecNumber>
    </recommendedName>
    <alternativeName>
        <fullName evidence="1">NAD(P)(+)-dependent glycerol-3-phosphate dehydrogenase</fullName>
    </alternativeName>
    <alternativeName>
        <fullName evidence="1">NAD(P)H-dependent dihydroxyacetone-phosphate reductase</fullName>
    </alternativeName>
</protein>
<gene>
    <name evidence="1" type="primary">gpsA</name>
    <name type="ordered locus">RALTA_A0280</name>
</gene>
<comment type="function">
    <text evidence="1">Catalyzes the reduction of the glycolytic intermediate dihydroxyacetone phosphate (DHAP) to sn-glycerol 3-phosphate (G3P), the key precursor for phospholipid synthesis.</text>
</comment>
<comment type="catalytic activity">
    <reaction evidence="1">
        <text>sn-glycerol 3-phosphate + NAD(+) = dihydroxyacetone phosphate + NADH + H(+)</text>
        <dbReference type="Rhea" id="RHEA:11092"/>
        <dbReference type="ChEBI" id="CHEBI:15378"/>
        <dbReference type="ChEBI" id="CHEBI:57540"/>
        <dbReference type="ChEBI" id="CHEBI:57597"/>
        <dbReference type="ChEBI" id="CHEBI:57642"/>
        <dbReference type="ChEBI" id="CHEBI:57945"/>
        <dbReference type="EC" id="1.1.1.94"/>
    </reaction>
    <physiologicalReaction direction="right-to-left" evidence="1">
        <dbReference type="Rhea" id="RHEA:11094"/>
    </physiologicalReaction>
</comment>
<comment type="catalytic activity">
    <reaction evidence="1">
        <text>sn-glycerol 3-phosphate + NADP(+) = dihydroxyacetone phosphate + NADPH + H(+)</text>
        <dbReference type="Rhea" id="RHEA:11096"/>
        <dbReference type="ChEBI" id="CHEBI:15378"/>
        <dbReference type="ChEBI" id="CHEBI:57597"/>
        <dbReference type="ChEBI" id="CHEBI:57642"/>
        <dbReference type="ChEBI" id="CHEBI:57783"/>
        <dbReference type="ChEBI" id="CHEBI:58349"/>
        <dbReference type="EC" id="1.1.1.94"/>
    </reaction>
    <physiologicalReaction direction="right-to-left" evidence="1">
        <dbReference type="Rhea" id="RHEA:11098"/>
    </physiologicalReaction>
</comment>
<comment type="pathway">
    <text evidence="1">Membrane lipid metabolism; glycerophospholipid metabolism.</text>
</comment>
<comment type="subcellular location">
    <subcellularLocation>
        <location evidence="1">Cytoplasm</location>
    </subcellularLocation>
</comment>
<comment type="similarity">
    <text evidence="1">Belongs to the NAD-dependent glycerol-3-phosphate dehydrogenase family.</text>
</comment>
<organism>
    <name type="scientific">Cupriavidus taiwanensis (strain DSM 17343 / BCRC 17206 / CCUG 44338 / CIP 107171 / LMG 19424 / R1)</name>
    <name type="common">Ralstonia taiwanensis (strain LMG 19424)</name>
    <dbReference type="NCBI Taxonomy" id="977880"/>
    <lineage>
        <taxon>Bacteria</taxon>
        <taxon>Pseudomonadati</taxon>
        <taxon>Pseudomonadota</taxon>
        <taxon>Betaproteobacteria</taxon>
        <taxon>Burkholderiales</taxon>
        <taxon>Burkholderiaceae</taxon>
        <taxon>Cupriavidus</taxon>
    </lineage>
</organism>
<sequence length="338" mass="34657">MKLTFLGAGAWGTALASHAAATNDVVLWGRDPAQLGAIAATHENAAYLPGVKLSARLAVQADFELAVAHAADDPDGIVVVATPVAGLREMTRRLAARSARPVSMLWLCKGFEAGTHLLPHQMVRAELDAAGRTEGFAYGVLSGPSFAREVAQGLPCALTVAGTEPSLADRAQAAFHHHAMRIYGSDDLTGVEVGGAVKNVLAIATGASDGLGLGLNARAALVTRGLAEMTRLGLALGGRVETFMGLAGVGDLILTATGDLSRNRKVGQQLASGQSLEQVLAGLGHVAEGVRCAQAVAELAATHGIEMPIARAVCAVLFDGLSAADAVAQLLQRDARDE</sequence>
<proteinExistence type="inferred from homology"/>
<keyword id="KW-0963">Cytoplasm</keyword>
<keyword id="KW-0444">Lipid biosynthesis</keyword>
<keyword id="KW-0443">Lipid metabolism</keyword>
<keyword id="KW-0520">NAD</keyword>
<keyword id="KW-0521">NADP</keyword>
<keyword id="KW-0547">Nucleotide-binding</keyword>
<keyword id="KW-0560">Oxidoreductase</keyword>
<keyword id="KW-0594">Phospholipid biosynthesis</keyword>
<keyword id="KW-1208">Phospholipid metabolism</keyword>
<feature type="chain" id="PRO_1000190133" description="Glycerol-3-phosphate dehydrogenase [NAD(P)+]">
    <location>
        <begin position="1"/>
        <end position="338"/>
    </location>
</feature>
<feature type="active site" description="Proton acceptor" evidence="1">
    <location>
        <position position="198"/>
    </location>
</feature>
<feature type="binding site" evidence="1">
    <location>
        <position position="11"/>
    </location>
    <ligand>
        <name>NADPH</name>
        <dbReference type="ChEBI" id="CHEBI:57783"/>
    </ligand>
</feature>
<feature type="binding site" evidence="1">
    <location>
        <position position="30"/>
    </location>
    <ligand>
        <name>NADPH</name>
        <dbReference type="ChEBI" id="CHEBI:57783"/>
    </ligand>
</feature>
<feature type="binding site" evidence="1">
    <location>
        <position position="109"/>
    </location>
    <ligand>
        <name>NADPH</name>
        <dbReference type="ChEBI" id="CHEBI:57783"/>
    </ligand>
</feature>
<feature type="binding site" evidence="1">
    <location>
        <position position="109"/>
    </location>
    <ligand>
        <name>sn-glycerol 3-phosphate</name>
        <dbReference type="ChEBI" id="CHEBI:57597"/>
    </ligand>
</feature>
<feature type="binding site" evidence="1">
    <location>
        <position position="143"/>
    </location>
    <ligand>
        <name>sn-glycerol 3-phosphate</name>
        <dbReference type="ChEBI" id="CHEBI:57597"/>
    </ligand>
</feature>
<feature type="binding site" evidence="1">
    <location>
        <position position="145"/>
    </location>
    <ligand>
        <name>sn-glycerol 3-phosphate</name>
        <dbReference type="ChEBI" id="CHEBI:57597"/>
    </ligand>
</feature>
<feature type="binding site" evidence="1">
    <location>
        <position position="147"/>
    </location>
    <ligand>
        <name>NADPH</name>
        <dbReference type="ChEBI" id="CHEBI:57783"/>
    </ligand>
</feature>
<feature type="binding site" evidence="1">
    <location>
        <position position="198"/>
    </location>
    <ligand>
        <name>sn-glycerol 3-phosphate</name>
        <dbReference type="ChEBI" id="CHEBI:57597"/>
    </ligand>
</feature>
<feature type="binding site" evidence="1">
    <location>
        <position position="251"/>
    </location>
    <ligand>
        <name>sn-glycerol 3-phosphate</name>
        <dbReference type="ChEBI" id="CHEBI:57597"/>
    </ligand>
</feature>
<feature type="binding site" evidence="1">
    <location>
        <position position="261"/>
    </location>
    <ligand>
        <name>sn-glycerol 3-phosphate</name>
        <dbReference type="ChEBI" id="CHEBI:57597"/>
    </ligand>
</feature>
<feature type="binding site" evidence="1">
    <location>
        <position position="262"/>
    </location>
    <ligand>
        <name>NADPH</name>
        <dbReference type="ChEBI" id="CHEBI:57783"/>
    </ligand>
</feature>
<feature type="binding site" evidence="1">
    <location>
        <position position="262"/>
    </location>
    <ligand>
        <name>sn-glycerol 3-phosphate</name>
        <dbReference type="ChEBI" id="CHEBI:57597"/>
    </ligand>
</feature>
<feature type="binding site" evidence="1">
    <location>
        <position position="263"/>
    </location>
    <ligand>
        <name>sn-glycerol 3-phosphate</name>
        <dbReference type="ChEBI" id="CHEBI:57597"/>
    </ligand>
</feature>
<feature type="binding site" evidence="1">
    <location>
        <position position="286"/>
    </location>
    <ligand>
        <name>NADPH</name>
        <dbReference type="ChEBI" id="CHEBI:57783"/>
    </ligand>
</feature>
<feature type="binding site" evidence="1">
    <location>
        <position position="288"/>
    </location>
    <ligand>
        <name>NADPH</name>
        <dbReference type="ChEBI" id="CHEBI:57783"/>
    </ligand>
</feature>
<dbReference type="EC" id="1.1.1.94" evidence="1"/>
<dbReference type="EMBL" id="CU633749">
    <property type="protein sequence ID" value="CAP62950.1"/>
    <property type="molecule type" value="Genomic_DNA"/>
</dbReference>
<dbReference type="RefSeq" id="WP_012351617.1">
    <property type="nucleotide sequence ID" value="NC_010528.1"/>
</dbReference>
<dbReference type="SMR" id="B2AGQ1"/>
<dbReference type="GeneID" id="29760271"/>
<dbReference type="KEGG" id="cti:RALTA_A0280"/>
<dbReference type="eggNOG" id="COG0240">
    <property type="taxonomic scope" value="Bacteria"/>
</dbReference>
<dbReference type="HOGENOM" id="CLU_033449_0_2_4"/>
<dbReference type="BioCyc" id="CTAI977880:RALTA_RS01370-MONOMER"/>
<dbReference type="UniPathway" id="UPA00940"/>
<dbReference type="Proteomes" id="UP000001692">
    <property type="component" value="Chromosome 1"/>
</dbReference>
<dbReference type="GO" id="GO:0005829">
    <property type="term" value="C:cytosol"/>
    <property type="evidence" value="ECO:0007669"/>
    <property type="project" value="TreeGrafter"/>
</dbReference>
<dbReference type="GO" id="GO:0047952">
    <property type="term" value="F:glycerol-3-phosphate dehydrogenase [NAD(P)+] activity"/>
    <property type="evidence" value="ECO:0007669"/>
    <property type="project" value="UniProtKB-UniRule"/>
</dbReference>
<dbReference type="GO" id="GO:0051287">
    <property type="term" value="F:NAD binding"/>
    <property type="evidence" value="ECO:0007669"/>
    <property type="project" value="InterPro"/>
</dbReference>
<dbReference type="GO" id="GO:0005975">
    <property type="term" value="P:carbohydrate metabolic process"/>
    <property type="evidence" value="ECO:0007669"/>
    <property type="project" value="InterPro"/>
</dbReference>
<dbReference type="GO" id="GO:0046167">
    <property type="term" value="P:glycerol-3-phosphate biosynthetic process"/>
    <property type="evidence" value="ECO:0007669"/>
    <property type="project" value="UniProtKB-UniRule"/>
</dbReference>
<dbReference type="GO" id="GO:0046168">
    <property type="term" value="P:glycerol-3-phosphate catabolic process"/>
    <property type="evidence" value="ECO:0007669"/>
    <property type="project" value="InterPro"/>
</dbReference>
<dbReference type="GO" id="GO:0006650">
    <property type="term" value="P:glycerophospholipid metabolic process"/>
    <property type="evidence" value="ECO:0007669"/>
    <property type="project" value="UniProtKB-UniRule"/>
</dbReference>
<dbReference type="GO" id="GO:0008654">
    <property type="term" value="P:phospholipid biosynthetic process"/>
    <property type="evidence" value="ECO:0007669"/>
    <property type="project" value="UniProtKB-KW"/>
</dbReference>
<dbReference type="FunFam" id="1.10.1040.10:FF:000001">
    <property type="entry name" value="Glycerol-3-phosphate dehydrogenase [NAD(P)+]"/>
    <property type="match status" value="1"/>
</dbReference>
<dbReference type="FunFam" id="3.40.50.720:FF:000019">
    <property type="entry name" value="Glycerol-3-phosphate dehydrogenase [NAD(P)+]"/>
    <property type="match status" value="1"/>
</dbReference>
<dbReference type="Gene3D" id="1.10.1040.10">
    <property type="entry name" value="N-(1-d-carboxylethyl)-l-norvaline Dehydrogenase, domain 2"/>
    <property type="match status" value="1"/>
</dbReference>
<dbReference type="Gene3D" id="3.40.50.720">
    <property type="entry name" value="NAD(P)-binding Rossmann-like Domain"/>
    <property type="match status" value="1"/>
</dbReference>
<dbReference type="HAMAP" id="MF_00394">
    <property type="entry name" value="NAD_Glyc3P_dehydrog"/>
    <property type="match status" value="1"/>
</dbReference>
<dbReference type="InterPro" id="IPR008927">
    <property type="entry name" value="6-PGluconate_DH-like_C_sf"/>
</dbReference>
<dbReference type="InterPro" id="IPR013328">
    <property type="entry name" value="6PGD_dom2"/>
</dbReference>
<dbReference type="InterPro" id="IPR006168">
    <property type="entry name" value="G3P_DH_NAD-dep"/>
</dbReference>
<dbReference type="InterPro" id="IPR006109">
    <property type="entry name" value="G3P_DH_NAD-dep_C"/>
</dbReference>
<dbReference type="InterPro" id="IPR011128">
    <property type="entry name" value="G3P_DH_NAD-dep_N"/>
</dbReference>
<dbReference type="InterPro" id="IPR036291">
    <property type="entry name" value="NAD(P)-bd_dom_sf"/>
</dbReference>
<dbReference type="NCBIfam" id="NF000940">
    <property type="entry name" value="PRK00094.1-2"/>
    <property type="match status" value="1"/>
</dbReference>
<dbReference type="NCBIfam" id="NF000942">
    <property type="entry name" value="PRK00094.1-4"/>
    <property type="match status" value="1"/>
</dbReference>
<dbReference type="PANTHER" id="PTHR11728">
    <property type="entry name" value="GLYCEROL-3-PHOSPHATE DEHYDROGENASE"/>
    <property type="match status" value="1"/>
</dbReference>
<dbReference type="PANTHER" id="PTHR11728:SF1">
    <property type="entry name" value="GLYCEROL-3-PHOSPHATE DEHYDROGENASE [NAD(+)] 2, CHLOROPLASTIC"/>
    <property type="match status" value="1"/>
</dbReference>
<dbReference type="Pfam" id="PF07479">
    <property type="entry name" value="NAD_Gly3P_dh_C"/>
    <property type="match status" value="1"/>
</dbReference>
<dbReference type="Pfam" id="PF01210">
    <property type="entry name" value="NAD_Gly3P_dh_N"/>
    <property type="match status" value="1"/>
</dbReference>
<dbReference type="PIRSF" id="PIRSF000114">
    <property type="entry name" value="Glycerol-3-P_dh"/>
    <property type="match status" value="1"/>
</dbReference>
<dbReference type="PRINTS" id="PR00077">
    <property type="entry name" value="GPDHDRGNASE"/>
</dbReference>
<dbReference type="SUPFAM" id="SSF48179">
    <property type="entry name" value="6-phosphogluconate dehydrogenase C-terminal domain-like"/>
    <property type="match status" value="1"/>
</dbReference>
<dbReference type="SUPFAM" id="SSF51735">
    <property type="entry name" value="NAD(P)-binding Rossmann-fold domains"/>
    <property type="match status" value="1"/>
</dbReference>
<dbReference type="PROSITE" id="PS00957">
    <property type="entry name" value="NAD_G3PDH"/>
    <property type="match status" value="1"/>
</dbReference>
<accession>B2AGQ1</accession>
<reference key="1">
    <citation type="journal article" date="2008" name="Genome Res.">
        <title>Genome sequence of the beta-rhizobium Cupriavidus taiwanensis and comparative genomics of rhizobia.</title>
        <authorList>
            <person name="Amadou C."/>
            <person name="Pascal G."/>
            <person name="Mangenot S."/>
            <person name="Glew M."/>
            <person name="Bontemps C."/>
            <person name="Capela D."/>
            <person name="Carrere S."/>
            <person name="Cruveiller S."/>
            <person name="Dossat C."/>
            <person name="Lajus A."/>
            <person name="Marchetti M."/>
            <person name="Poinsot V."/>
            <person name="Rouy Z."/>
            <person name="Servin B."/>
            <person name="Saad M."/>
            <person name="Schenowitz C."/>
            <person name="Barbe V."/>
            <person name="Batut J."/>
            <person name="Medigue C."/>
            <person name="Masson-Boivin C."/>
        </authorList>
    </citation>
    <scope>NUCLEOTIDE SEQUENCE [LARGE SCALE GENOMIC DNA]</scope>
    <source>
        <strain>DSM 17343 / BCRC 17206 / CCUG 44338 / CIP 107171 / LMG 19424 / R1</strain>
    </source>
</reference>
<evidence type="ECO:0000255" key="1">
    <source>
        <dbReference type="HAMAP-Rule" id="MF_00394"/>
    </source>
</evidence>